<reference key="1">
    <citation type="journal article" date="2002" name="Proc. Natl. Acad. Sci. U.S.A.">
        <title>Extensive mosaic structure revealed by the complete genome sequence of uropathogenic Escherichia coli.</title>
        <authorList>
            <person name="Welch R.A."/>
            <person name="Burland V."/>
            <person name="Plunkett G. III"/>
            <person name="Redford P."/>
            <person name="Roesch P."/>
            <person name="Rasko D."/>
            <person name="Buckles E.L."/>
            <person name="Liou S.-R."/>
            <person name="Boutin A."/>
            <person name="Hackett J."/>
            <person name="Stroud D."/>
            <person name="Mayhew G.F."/>
            <person name="Rose D.J."/>
            <person name="Zhou S."/>
            <person name="Schwartz D.C."/>
            <person name="Perna N.T."/>
            <person name="Mobley H.L.T."/>
            <person name="Donnenberg M.S."/>
            <person name="Blattner F.R."/>
        </authorList>
    </citation>
    <scope>NUCLEOTIDE SEQUENCE [LARGE SCALE GENOMIC DNA]</scope>
    <source>
        <strain>CFT073 / ATCC 700928 / UPEC</strain>
    </source>
</reference>
<evidence type="ECO:0000250" key="1"/>
<evidence type="ECO:0000255" key="2">
    <source>
        <dbReference type="HAMAP-Rule" id="MF_00091"/>
    </source>
</evidence>
<feature type="initiator methionine" description="Removed" evidence="1">
    <location>
        <position position="1"/>
    </location>
</feature>
<feature type="chain" id="PRO_0000172221" description="S-ribosylhomocysteine lyase">
    <location>
        <begin position="2"/>
        <end position="171"/>
    </location>
</feature>
<feature type="binding site" evidence="2">
    <location>
        <position position="54"/>
    </location>
    <ligand>
        <name>Fe cation</name>
        <dbReference type="ChEBI" id="CHEBI:24875"/>
    </ligand>
</feature>
<feature type="binding site" evidence="2">
    <location>
        <position position="58"/>
    </location>
    <ligand>
        <name>Fe cation</name>
        <dbReference type="ChEBI" id="CHEBI:24875"/>
    </ligand>
</feature>
<feature type="binding site" evidence="2">
    <location>
        <position position="128"/>
    </location>
    <ligand>
        <name>Fe cation</name>
        <dbReference type="ChEBI" id="CHEBI:24875"/>
    </ligand>
</feature>
<name>LUXS_ECOL6</name>
<keyword id="KW-0071">Autoinducer synthesis</keyword>
<keyword id="KW-0408">Iron</keyword>
<keyword id="KW-0456">Lyase</keyword>
<keyword id="KW-0479">Metal-binding</keyword>
<keyword id="KW-0673">Quorum sensing</keyword>
<keyword id="KW-1185">Reference proteome</keyword>
<organism>
    <name type="scientific">Escherichia coli O6:H1 (strain CFT073 / ATCC 700928 / UPEC)</name>
    <dbReference type="NCBI Taxonomy" id="199310"/>
    <lineage>
        <taxon>Bacteria</taxon>
        <taxon>Pseudomonadati</taxon>
        <taxon>Pseudomonadota</taxon>
        <taxon>Gammaproteobacteria</taxon>
        <taxon>Enterobacterales</taxon>
        <taxon>Enterobacteriaceae</taxon>
        <taxon>Escherichia</taxon>
    </lineage>
</organism>
<gene>
    <name evidence="2" type="primary">luxS</name>
    <name type="ordered locus">c3244</name>
</gene>
<sequence length="171" mass="19443">MPLLDSFTVDHTRMEAPAVRVAKTMNTPHGDAITVFDLRFCVPNKEVMPERGIHTLEHLFAGFMRNHLNGNGVEIIDISPMGCRTGFYMSLIGTPDEQRVADAWKAAMEDVLKVQDQNQIPELNVYQCGTYQMHSLQEAQDIARNILERDVRINSNEELALPKEKLQELHI</sequence>
<comment type="function">
    <text evidence="2">Involved in the synthesis of autoinducer 2 (AI-2) which is secreted by bacteria and is used to communicate both the cell density and the metabolic potential of the environment. The regulation of gene expression in response to changes in cell density is called quorum sensing. Catalyzes the transformation of S-ribosylhomocysteine (RHC) to homocysteine (HC) and 4,5-dihydroxy-2,3-pentadione (DPD).</text>
</comment>
<comment type="catalytic activity">
    <reaction evidence="2">
        <text>S-(5-deoxy-D-ribos-5-yl)-L-homocysteine = (S)-4,5-dihydroxypentane-2,3-dione + L-homocysteine</text>
        <dbReference type="Rhea" id="RHEA:17753"/>
        <dbReference type="ChEBI" id="CHEBI:29484"/>
        <dbReference type="ChEBI" id="CHEBI:58195"/>
        <dbReference type="ChEBI" id="CHEBI:58199"/>
        <dbReference type="EC" id="4.4.1.21"/>
    </reaction>
</comment>
<comment type="cofactor">
    <cofactor evidence="2">
        <name>Fe cation</name>
        <dbReference type="ChEBI" id="CHEBI:24875"/>
    </cofactor>
    <text evidence="2">Binds 1 Fe cation per subunit.</text>
</comment>
<comment type="subunit">
    <text evidence="2">Homodimer.</text>
</comment>
<comment type="similarity">
    <text evidence="2">Belongs to the LuxS family.</text>
</comment>
<dbReference type="EC" id="4.4.1.21" evidence="2"/>
<dbReference type="EMBL" id="AE014075">
    <property type="protein sequence ID" value="AAN81696.1"/>
    <property type="molecule type" value="Genomic_DNA"/>
</dbReference>
<dbReference type="RefSeq" id="WP_001130208.1">
    <property type="nucleotide sequence ID" value="NZ_CP051263.1"/>
</dbReference>
<dbReference type="SMR" id="Q8FEP8"/>
<dbReference type="STRING" id="199310.c3244"/>
<dbReference type="KEGG" id="ecc:c3244"/>
<dbReference type="eggNOG" id="COG1854">
    <property type="taxonomic scope" value="Bacteria"/>
</dbReference>
<dbReference type="HOGENOM" id="CLU_107531_2_0_6"/>
<dbReference type="BioCyc" id="ECOL199310:C3244-MONOMER"/>
<dbReference type="Proteomes" id="UP000001410">
    <property type="component" value="Chromosome"/>
</dbReference>
<dbReference type="GO" id="GO:0005506">
    <property type="term" value="F:iron ion binding"/>
    <property type="evidence" value="ECO:0007669"/>
    <property type="project" value="InterPro"/>
</dbReference>
<dbReference type="GO" id="GO:0043768">
    <property type="term" value="F:S-ribosylhomocysteine lyase activity"/>
    <property type="evidence" value="ECO:0007669"/>
    <property type="project" value="UniProtKB-UniRule"/>
</dbReference>
<dbReference type="GO" id="GO:0009372">
    <property type="term" value="P:quorum sensing"/>
    <property type="evidence" value="ECO:0007669"/>
    <property type="project" value="UniProtKB-UniRule"/>
</dbReference>
<dbReference type="FunFam" id="3.30.1360.80:FF:000001">
    <property type="entry name" value="S-ribosylhomocysteine lyase"/>
    <property type="match status" value="1"/>
</dbReference>
<dbReference type="Gene3D" id="3.30.1360.80">
    <property type="entry name" value="S-ribosylhomocysteinase (LuxS)"/>
    <property type="match status" value="1"/>
</dbReference>
<dbReference type="HAMAP" id="MF_00091">
    <property type="entry name" value="LuxS"/>
    <property type="match status" value="1"/>
</dbReference>
<dbReference type="InterPro" id="IPR037005">
    <property type="entry name" value="LuxS_sf"/>
</dbReference>
<dbReference type="InterPro" id="IPR011249">
    <property type="entry name" value="Metalloenz_LuxS/M16"/>
</dbReference>
<dbReference type="InterPro" id="IPR003815">
    <property type="entry name" value="S-ribosylhomocysteinase"/>
</dbReference>
<dbReference type="NCBIfam" id="NF002602">
    <property type="entry name" value="PRK02260.1-2"/>
    <property type="match status" value="1"/>
</dbReference>
<dbReference type="PANTHER" id="PTHR35799">
    <property type="entry name" value="S-RIBOSYLHOMOCYSTEINE LYASE"/>
    <property type="match status" value="1"/>
</dbReference>
<dbReference type="PANTHER" id="PTHR35799:SF1">
    <property type="entry name" value="S-RIBOSYLHOMOCYSTEINE LYASE"/>
    <property type="match status" value="1"/>
</dbReference>
<dbReference type="Pfam" id="PF02664">
    <property type="entry name" value="LuxS"/>
    <property type="match status" value="1"/>
</dbReference>
<dbReference type="PIRSF" id="PIRSF006160">
    <property type="entry name" value="AI2"/>
    <property type="match status" value="1"/>
</dbReference>
<dbReference type="PRINTS" id="PR01487">
    <property type="entry name" value="LUXSPROTEIN"/>
</dbReference>
<dbReference type="SUPFAM" id="SSF63411">
    <property type="entry name" value="LuxS/MPP-like metallohydrolase"/>
    <property type="match status" value="1"/>
</dbReference>
<proteinExistence type="inferred from homology"/>
<accession>Q8FEP8</accession>
<protein>
    <recommendedName>
        <fullName evidence="2">S-ribosylhomocysteine lyase</fullName>
        <ecNumber evidence="2">4.4.1.21</ecNumber>
    </recommendedName>
    <alternativeName>
        <fullName evidence="2">AI-2 synthesis protein</fullName>
    </alternativeName>
    <alternativeName>
        <fullName evidence="2">Autoinducer-2 production protein LuxS</fullName>
    </alternativeName>
</protein>